<proteinExistence type="inferred from homology"/>
<gene>
    <name evidence="1" type="primary">cysD</name>
    <name type="ordered locus">PSPPH_4133</name>
</gene>
<organism>
    <name type="scientific">Pseudomonas savastanoi pv. phaseolicola (strain 1448A / Race 6)</name>
    <name type="common">Pseudomonas syringae pv. phaseolicola (strain 1448A / Race 6)</name>
    <dbReference type="NCBI Taxonomy" id="264730"/>
    <lineage>
        <taxon>Bacteria</taxon>
        <taxon>Pseudomonadati</taxon>
        <taxon>Pseudomonadota</taxon>
        <taxon>Gammaproteobacteria</taxon>
        <taxon>Pseudomonadales</taxon>
        <taxon>Pseudomonadaceae</taxon>
        <taxon>Pseudomonas</taxon>
    </lineage>
</organism>
<reference key="1">
    <citation type="journal article" date="2005" name="J. Bacteriol.">
        <title>Whole-genome sequence analysis of Pseudomonas syringae pv. phaseolicola 1448A reveals divergence among pathovars in genes involved in virulence and transposition.</title>
        <authorList>
            <person name="Joardar V."/>
            <person name="Lindeberg M."/>
            <person name="Jackson R.W."/>
            <person name="Selengut J."/>
            <person name="Dodson R."/>
            <person name="Brinkac L.M."/>
            <person name="Daugherty S.C."/>
            <person name="DeBoy R.T."/>
            <person name="Durkin A.S."/>
            <person name="Gwinn Giglio M."/>
            <person name="Madupu R."/>
            <person name="Nelson W.C."/>
            <person name="Rosovitz M.J."/>
            <person name="Sullivan S.A."/>
            <person name="Crabtree J."/>
            <person name="Creasy T."/>
            <person name="Davidsen T.M."/>
            <person name="Haft D.H."/>
            <person name="Zafar N."/>
            <person name="Zhou L."/>
            <person name="Halpin R."/>
            <person name="Holley T."/>
            <person name="Khouri H.M."/>
            <person name="Feldblyum T.V."/>
            <person name="White O."/>
            <person name="Fraser C.M."/>
            <person name="Chatterjee A.K."/>
            <person name="Cartinhour S."/>
            <person name="Schneider D."/>
            <person name="Mansfield J.W."/>
            <person name="Collmer A."/>
            <person name="Buell R."/>
        </authorList>
    </citation>
    <scope>NUCLEOTIDE SEQUENCE [LARGE SCALE GENOMIC DNA]</scope>
    <source>
        <strain>1448A / Race 6</strain>
    </source>
</reference>
<sequence>MVDKLTHLKQLEAESIHIIREVAAEFDNPVMLYSIGKDSAVMLHLARKAFFPGKLPFPVMHVDTRWKFQEMYRFRDKMVEEMGLDLITHINPDGVAQGINPFTHGSAKHTDIMKTEGLKQALDKHGFDAAFGGARRDEEKSRAKERVYSFRDSKHRWDPKNQRPELWNVYNGNVNKGESIRVFPLSNWTELDIWQYIYLEGIPIVPLYFAAERDVIEKNGTLIMIDDERILEHLTDEEKSRIVKKKVRFRTLGCYPLTGAVESEATSLTDIIQEMLLTRTSERQGRVIDHDGAGSMEEKKRQGYF</sequence>
<keyword id="KW-0067">ATP-binding</keyword>
<keyword id="KW-0547">Nucleotide-binding</keyword>
<keyword id="KW-0548">Nucleotidyltransferase</keyword>
<keyword id="KW-0808">Transferase</keyword>
<accession>Q48ED3</accession>
<evidence type="ECO:0000255" key="1">
    <source>
        <dbReference type="HAMAP-Rule" id="MF_00064"/>
    </source>
</evidence>
<name>CYSD_PSE14</name>
<comment type="function">
    <text evidence="1">With CysN forms the ATP sulfurylase (ATPS) that catalyzes the adenylation of sulfate producing adenosine 5'-phosphosulfate (APS) and diphosphate, the first enzymatic step in sulfur assimilation pathway. APS synthesis involves the formation of a high-energy phosphoric-sulfuric acid anhydride bond driven by GTP hydrolysis by CysN coupled to ATP hydrolysis by CysD.</text>
</comment>
<comment type="catalytic activity">
    <reaction evidence="1">
        <text>sulfate + ATP + H(+) = adenosine 5'-phosphosulfate + diphosphate</text>
        <dbReference type="Rhea" id="RHEA:18133"/>
        <dbReference type="ChEBI" id="CHEBI:15378"/>
        <dbReference type="ChEBI" id="CHEBI:16189"/>
        <dbReference type="ChEBI" id="CHEBI:30616"/>
        <dbReference type="ChEBI" id="CHEBI:33019"/>
        <dbReference type="ChEBI" id="CHEBI:58243"/>
        <dbReference type="EC" id="2.7.7.4"/>
    </reaction>
</comment>
<comment type="pathway">
    <text evidence="1">Sulfur metabolism; hydrogen sulfide biosynthesis; sulfite from sulfate: step 1/3.</text>
</comment>
<comment type="subunit">
    <text evidence="1">Heterodimer composed of CysD, the smaller subunit, and CysN.</text>
</comment>
<comment type="similarity">
    <text evidence="1">Belongs to the PAPS reductase family. CysD subfamily.</text>
</comment>
<feature type="chain" id="PRO_1000008965" description="Sulfate adenylyltransferase subunit 2">
    <location>
        <begin position="1"/>
        <end position="305"/>
    </location>
</feature>
<protein>
    <recommendedName>
        <fullName evidence="1">Sulfate adenylyltransferase subunit 2</fullName>
        <ecNumber evidence="1">2.7.7.4</ecNumber>
    </recommendedName>
    <alternativeName>
        <fullName evidence="1">ATP-sulfurylase small subunit</fullName>
    </alternativeName>
    <alternativeName>
        <fullName evidence="1">Sulfate adenylate transferase</fullName>
        <shortName evidence="1">SAT</shortName>
    </alternativeName>
</protein>
<dbReference type="EC" id="2.7.7.4" evidence="1"/>
<dbReference type="EMBL" id="CP000058">
    <property type="protein sequence ID" value="AAZ35686.1"/>
    <property type="molecule type" value="Genomic_DNA"/>
</dbReference>
<dbReference type="RefSeq" id="WP_002555071.1">
    <property type="nucleotide sequence ID" value="NC_005773.3"/>
</dbReference>
<dbReference type="SMR" id="Q48ED3"/>
<dbReference type="GeneID" id="69861185"/>
<dbReference type="KEGG" id="psp:PSPPH_4133"/>
<dbReference type="eggNOG" id="COG0175">
    <property type="taxonomic scope" value="Bacteria"/>
</dbReference>
<dbReference type="HOGENOM" id="CLU_043026_0_0_6"/>
<dbReference type="UniPathway" id="UPA00140">
    <property type="reaction ID" value="UER00204"/>
</dbReference>
<dbReference type="Proteomes" id="UP000000551">
    <property type="component" value="Chromosome"/>
</dbReference>
<dbReference type="GO" id="GO:0005524">
    <property type="term" value="F:ATP binding"/>
    <property type="evidence" value="ECO:0007669"/>
    <property type="project" value="UniProtKB-KW"/>
</dbReference>
<dbReference type="GO" id="GO:0004781">
    <property type="term" value="F:sulfate adenylyltransferase (ATP) activity"/>
    <property type="evidence" value="ECO:0007669"/>
    <property type="project" value="UniProtKB-UniRule"/>
</dbReference>
<dbReference type="GO" id="GO:0070814">
    <property type="term" value="P:hydrogen sulfide biosynthetic process"/>
    <property type="evidence" value="ECO:0007669"/>
    <property type="project" value="UniProtKB-UniRule"/>
</dbReference>
<dbReference type="GO" id="GO:0000103">
    <property type="term" value="P:sulfate assimilation"/>
    <property type="evidence" value="ECO:0007669"/>
    <property type="project" value="UniProtKB-UniRule"/>
</dbReference>
<dbReference type="CDD" id="cd23946">
    <property type="entry name" value="Sulfate_adenylyltransferase_2"/>
    <property type="match status" value="1"/>
</dbReference>
<dbReference type="FunFam" id="3.40.50.620:FF:000002">
    <property type="entry name" value="Sulfate adenylyltransferase subunit 2"/>
    <property type="match status" value="1"/>
</dbReference>
<dbReference type="Gene3D" id="3.40.50.620">
    <property type="entry name" value="HUPs"/>
    <property type="match status" value="1"/>
</dbReference>
<dbReference type="HAMAP" id="MF_00064">
    <property type="entry name" value="Sulf_adenylyltr_sub2"/>
    <property type="match status" value="1"/>
</dbReference>
<dbReference type="InterPro" id="IPR002500">
    <property type="entry name" value="PAPS_reduct_dom"/>
</dbReference>
<dbReference type="InterPro" id="IPR014729">
    <property type="entry name" value="Rossmann-like_a/b/a_fold"/>
</dbReference>
<dbReference type="InterPro" id="IPR011784">
    <property type="entry name" value="SO4_adenylTrfase_ssu"/>
</dbReference>
<dbReference type="InterPro" id="IPR050128">
    <property type="entry name" value="Sulfate_adenylyltrnsfr_sub2"/>
</dbReference>
<dbReference type="NCBIfam" id="TIGR02039">
    <property type="entry name" value="CysD"/>
    <property type="match status" value="1"/>
</dbReference>
<dbReference type="NCBIfam" id="NF003587">
    <property type="entry name" value="PRK05253.1"/>
    <property type="match status" value="1"/>
</dbReference>
<dbReference type="NCBIfam" id="NF009214">
    <property type="entry name" value="PRK12563.1"/>
    <property type="match status" value="1"/>
</dbReference>
<dbReference type="PANTHER" id="PTHR43196">
    <property type="entry name" value="SULFATE ADENYLYLTRANSFERASE SUBUNIT 2"/>
    <property type="match status" value="1"/>
</dbReference>
<dbReference type="PANTHER" id="PTHR43196:SF1">
    <property type="entry name" value="SULFATE ADENYLYLTRANSFERASE SUBUNIT 2"/>
    <property type="match status" value="1"/>
</dbReference>
<dbReference type="Pfam" id="PF01507">
    <property type="entry name" value="PAPS_reduct"/>
    <property type="match status" value="1"/>
</dbReference>
<dbReference type="PIRSF" id="PIRSF002936">
    <property type="entry name" value="CysDAde_trans"/>
    <property type="match status" value="1"/>
</dbReference>
<dbReference type="SUPFAM" id="SSF52402">
    <property type="entry name" value="Adenine nucleotide alpha hydrolases-like"/>
    <property type="match status" value="1"/>
</dbReference>